<reference key="1">
    <citation type="journal article" date="2001" name="Nucleic Acids Res.">
        <title>The complete genome sequence of the murine respiratory pathogen Mycoplasma pulmonis.</title>
        <authorList>
            <person name="Chambaud I."/>
            <person name="Heilig R."/>
            <person name="Ferris S."/>
            <person name="Barbe V."/>
            <person name="Samson D."/>
            <person name="Galisson F."/>
            <person name="Moszer I."/>
            <person name="Dybvig K."/>
            <person name="Wroblewski H."/>
            <person name="Viari A."/>
            <person name="Rocha E.P.C."/>
            <person name="Blanchard A."/>
        </authorList>
    </citation>
    <scope>NUCLEOTIDE SEQUENCE [LARGE SCALE GENOMIC DNA]</scope>
    <source>
        <strain>UAB CTIP</strain>
    </source>
</reference>
<name>RL31_MYCPU</name>
<feature type="chain" id="PRO_0000173130" description="Large ribosomal subunit protein bL31">
    <location>
        <begin position="1"/>
        <end position="69"/>
    </location>
</feature>
<organism>
    <name type="scientific">Mycoplasmopsis pulmonis (strain UAB CTIP)</name>
    <name type="common">Mycoplasma pulmonis</name>
    <dbReference type="NCBI Taxonomy" id="272635"/>
    <lineage>
        <taxon>Bacteria</taxon>
        <taxon>Bacillati</taxon>
        <taxon>Mycoplasmatota</taxon>
        <taxon>Mycoplasmoidales</taxon>
        <taxon>Metamycoplasmataceae</taxon>
        <taxon>Mycoplasmopsis</taxon>
    </lineage>
</organism>
<accession>Q98R70</accession>
<sequence length="69" mass="7951">MQKDIHLKMEPLKITCSTCFTSFDIVSSRKTIAIDICSKCHPFYTGDRTLAKATGQIDKFQKRLQKKQK</sequence>
<gene>
    <name evidence="1" type="primary">rpmE</name>
    <name type="ordered locus">MYPU_1400</name>
</gene>
<evidence type="ECO:0000255" key="1">
    <source>
        <dbReference type="HAMAP-Rule" id="MF_00501"/>
    </source>
</evidence>
<evidence type="ECO:0000305" key="2"/>
<comment type="function">
    <text evidence="1">Binds the 23S rRNA.</text>
</comment>
<comment type="subunit">
    <text evidence="1">Part of the 50S ribosomal subunit.</text>
</comment>
<comment type="similarity">
    <text evidence="1">Belongs to the bacterial ribosomal protein bL31 family. Type A subfamily.</text>
</comment>
<dbReference type="EMBL" id="AL445563">
    <property type="protein sequence ID" value="CAC13313.1"/>
    <property type="molecule type" value="Genomic_DNA"/>
</dbReference>
<dbReference type="PIR" id="D90529">
    <property type="entry name" value="D90529"/>
</dbReference>
<dbReference type="RefSeq" id="WP_010924944.1">
    <property type="nucleotide sequence ID" value="NC_002771.1"/>
</dbReference>
<dbReference type="STRING" id="272635.gene:17576724"/>
<dbReference type="KEGG" id="mpu:MYPU_1400"/>
<dbReference type="eggNOG" id="COG0254">
    <property type="taxonomic scope" value="Bacteria"/>
</dbReference>
<dbReference type="HOGENOM" id="CLU_114306_4_3_14"/>
<dbReference type="BioCyc" id="MPUL272635:G1GT6-141-MONOMER"/>
<dbReference type="Proteomes" id="UP000000528">
    <property type="component" value="Chromosome"/>
</dbReference>
<dbReference type="GO" id="GO:1990904">
    <property type="term" value="C:ribonucleoprotein complex"/>
    <property type="evidence" value="ECO:0007669"/>
    <property type="project" value="UniProtKB-KW"/>
</dbReference>
<dbReference type="GO" id="GO:0005840">
    <property type="term" value="C:ribosome"/>
    <property type="evidence" value="ECO:0007669"/>
    <property type="project" value="UniProtKB-KW"/>
</dbReference>
<dbReference type="GO" id="GO:0019843">
    <property type="term" value="F:rRNA binding"/>
    <property type="evidence" value="ECO:0007669"/>
    <property type="project" value="UniProtKB-KW"/>
</dbReference>
<dbReference type="GO" id="GO:0003735">
    <property type="term" value="F:structural constituent of ribosome"/>
    <property type="evidence" value="ECO:0007669"/>
    <property type="project" value="InterPro"/>
</dbReference>
<dbReference type="GO" id="GO:0006412">
    <property type="term" value="P:translation"/>
    <property type="evidence" value="ECO:0007669"/>
    <property type="project" value="UniProtKB-UniRule"/>
</dbReference>
<dbReference type="Gene3D" id="4.10.830.30">
    <property type="entry name" value="Ribosomal protein L31"/>
    <property type="match status" value="1"/>
</dbReference>
<dbReference type="HAMAP" id="MF_00501">
    <property type="entry name" value="Ribosomal_bL31_1"/>
    <property type="match status" value="1"/>
</dbReference>
<dbReference type="InterPro" id="IPR034704">
    <property type="entry name" value="Ribosomal_bL28/bL31-like_sf"/>
</dbReference>
<dbReference type="InterPro" id="IPR002150">
    <property type="entry name" value="Ribosomal_bL31"/>
</dbReference>
<dbReference type="InterPro" id="IPR027491">
    <property type="entry name" value="Ribosomal_bL31_A"/>
</dbReference>
<dbReference type="InterPro" id="IPR042105">
    <property type="entry name" value="Ribosomal_bL31_sf"/>
</dbReference>
<dbReference type="NCBIfam" id="TIGR00105">
    <property type="entry name" value="L31"/>
    <property type="match status" value="1"/>
</dbReference>
<dbReference type="NCBIfam" id="NF000612">
    <property type="entry name" value="PRK00019.1"/>
    <property type="match status" value="1"/>
</dbReference>
<dbReference type="PANTHER" id="PTHR33280">
    <property type="entry name" value="50S RIBOSOMAL PROTEIN L31, CHLOROPLASTIC"/>
    <property type="match status" value="1"/>
</dbReference>
<dbReference type="PANTHER" id="PTHR33280:SF1">
    <property type="entry name" value="LARGE RIBOSOMAL SUBUNIT PROTEIN BL31C"/>
    <property type="match status" value="1"/>
</dbReference>
<dbReference type="Pfam" id="PF01197">
    <property type="entry name" value="Ribosomal_L31"/>
    <property type="match status" value="1"/>
</dbReference>
<dbReference type="PRINTS" id="PR01249">
    <property type="entry name" value="RIBOSOMALL31"/>
</dbReference>
<dbReference type="SUPFAM" id="SSF143800">
    <property type="entry name" value="L28p-like"/>
    <property type="match status" value="1"/>
</dbReference>
<dbReference type="PROSITE" id="PS01143">
    <property type="entry name" value="RIBOSOMAL_L31"/>
    <property type="match status" value="1"/>
</dbReference>
<proteinExistence type="inferred from homology"/>
<protein>
    <recommendedName>
        <fullName evidence="1">Large ribosomal subunit protein bL31</fullName>
    </recommendedName>
    <alternativeName>
        <fullName evidence="2">50S ribosomal protein L31</fullName>
    </alternativeName>
</protein>
<keyword id="KW-1185">Reference proteome</keyword>
<keyword id="KW-0687">Ribonucleoprotein</keyword>
<keyword id="KW-0689">Ribosomal protein</keyword>
<keyword id="KW-0694">RNA-binding</keyword>
<keyword id="KW-0699">rRNA-binding</keyword>